<sequence>MAQAPVSPVVLVILDGWGYRQSTEANAIALAKTPVMDCLWTSYPRTLIHTSGKDVGLPNGQMGNSEVGHLNLGAGRIVPQELVRISDAVEDKSLLRNPALVNICQEVRDRQSKLHLIGLCSDGGVHSHLDHLIGLLELAKEQHLDQVCIHVITDGRDTNTNEGINAVAKLESSIKEIGVGRIVTVSGRYYAMDRDRRWDRIQKAYDVYTQDRPGDGRSATEVIKDFYKNSITDEFIEPTRIAPGAIKSGDGVIFFNFRPDRARQLCYALTMPNFDGFERELIQPLSFVTFTQYDPKLPVKVAFEPQNLNNILGEVVAREGLKQFRTAETEKYPHVTYFFNGGLENPFEGEDRELIQSPMVATYDQAPAMSAETVTDTACNAIEKGIYSLVVINYANPDMVGHTGNLEAAIQAIETVDNCLGRLLTSISKMGGTVLITADHGNAELMVDENGNPWTAHSTNPVPLIIVEGEGRKIPGHGGAVDLADNGRLADIAPTILEILQLPKPEEMTGRSLIEPIHLEIKQNRTPVRISR</sequence>
<comment type="function">
    <text evidence="1">Catalyzes the interconversion of 2-phosphoglycerate and 3-phosphoglycerate.</text>
</comment>
<comment type="catalytic activity">
    <reaction evidence="1">
        <text>(2R)-2-phosphoglycerate = (2R)-3-phosphoglycerate</text>
        <dbReference type="Rhea" id="RHEA:15901"/>
        <dbReference type="ChEBI" id="CHEBI:58272"/>
        <dbReference type="ChEBI" id="CHEBI:58289"/>
        <dbReference type="EC" id="5.4.2.12"/>
    </reaction>
</comment>
<comment type="cofactor">
    <cofactor evidence="1">
        <name>Mn(2+)</name>
        <dbReference type="ChEBI" id="CHEBI:29035"/>
    </cofactor>
    <text evidence="1">Binds 2 manganese ions per subunit.</text>
</comment>
<comment type="pathway">
    <text evidence="1">Carbohydrate degradation; glycolysis; pyruvate from D-glyceraldehyde 3-phosphate: step 3/5.</text>
</comment>
<comment type="subunit">
    <text evidence="1">Monomer.</text>
</comment>
<comment type="similarity">
    <text evidence="1">Belongs to the BPG-independent phosphoglycerate mutase family.</text>
</comment>
<organism>
    <name type="scientific">Rippkaea orientalis (strain PCC 8801 / RF-1)</name>
    <name type="common">Cyanothece sp. (strain PCC 8801)</name>
    <dbReference type="NCBI Taxonomy" id="41431"/>
    <lineage>
        <taxon>Bacteria</taxon>
        <taxon>Bacillati</taxon>
        <taxon>Cyanobacteriota</taxon>
        <taxon>Cyanophyceae</taxon>
        <taxon>Oscillatoriophycideae</taxon>
        <taxon>Chroococcales</taxon>
        <taxon>Aphanothecaceae</taxon>
        <taxon>Rippkaea</taxon>
        <taxon>Rippkaea orientalis</taxon>
    </lineage>
</organism>
<accession>B7K189</accession>
<protein>
    <recommendedName>
        <fullName evidence="1">2,3-bisphosphoglycerate-independent phosphoglycerate mutase</fullName>
        <shortName evidence="1">BPG-independent PGAM</shortName>
        <shortName evidence="1">Phosphoglyceromutase</shortName>
        <shortName evidence="1">iPGM</shortName>
        <ecNumber evidence="1">5.4.2.12</ecNumber>
    </recommendedName>
</protein>
<evidence type="ECO:0000255" key="1">
    <source>
        <dbReference type="HAMAP-Rule" id="MF_01038"/>
    </source>
</evidence>
<keyword id="KW-0324">Glycolysis</keyword>
<keyword id="KW-0413">Isomerase</keyword>
<keyword id="KW-0464">Manganese</keyword>
<keyword id="KW-0479">Metal-binding</keyword>
<keyword id="KW-1185">Reference proteome</keyword>
<dbReference type="EC" id="5.4.2.12" evidence="1"/>
<dbReference type="EMBL" id="CP001287">
    <property type="protein sequence ID" value="ACK66284.1"/>
    <property type="molecule type" value="Genomic_DNA"/>
</dbReference>
<dbReference type="RefSeq" id="WP_012595552.1">
    <property type="nucleotide sequence ID" value="NC_011726.1"/>
</dbReference>
<dbReference type="SMR" id="B7K189"/>
<dbReference type="STRING" id="41431.PCC8801_2264"/>
<dbReference type="KEGG" id="cyp:PCC8801_2264"/>
<dbReference type="eggNOG" id="COG0696">
    <property type="taxonomic scope" value="Bacteria"/>
</dbReference>
<dbReference type="HOGENOM" id="CLU_026099_2_0_3"/>
<dbReference type="OrthoDB" id="9800863at2"/>
<dbReference type="UniPathway" id="UPA00109">
    <property type="reaction ID" value="UER00186"/>
</dbReference>
<dbReference type="Proteomes" id="UP000008204">
    <property type="component" value="Chromosome"/>
</dbReference>
<dbReference type="GO" id="GO:0005829">
    <property type="term" value="C:cytosol"/>
    <property type="evidence" value="ECO:0007669"/>
    <property type="project" value="TreeGrafter"/>
</dbReference>
<dbReference type="GO" id="GO:0030145">
    <property type="term" value="F:manganese ion binding"/>
    <property type="evidence" value="ECO:0007669"/>
    <property type="project" value="UniProtKB-UniRule"/>
</dbReference>
<dbReference type="GO" id="GO:0004619">
    <property type="term" value="F:phosphoglycerate mutase activity"/>
    <property type="evidence" value="ECO:0007669"/>
    <property type="project" value="UniProtKB-EC"/>
</dbReference>
<dbReference type="GO" id="GO:0006007">
    <property type="term" value="P:glucose catabolic process"/>
    <property type="evidence" value="ECO:0007669"/>
    <property type="project" value="InterPro"/>
</dbReference>
<dbReference type="GO" id="GO:0006096">
    <property type="term" value="P:glycolytic process"/>
    <property type="evidence" value="ECO:0007669"/>
    <property type="project" value="UniProtKB-UniRule"/>
</dbReference>
<dbReference type="CDD" id="cd16010">
    <property type="entry name" value="iPGM"/>
    <property type="match status" value="1"/>
</dbReference>
<dbReference type="FunFam" id="3.40.1450.10:FF:000002">
    <property type="entry name" value="2,3-bisphosphoglycerate-independent phosphoglycerate mutase"/>
    <property type="match status" value="1"/>
</dbReference>
<dbReference type="Gene3D" id="3.40.720.10">
    <property type="entry name" value="Alkaline Phosphatase, subunit A"/>
    <property type="match status" value="1"/>
</dbReference>
<dbReference type="Gene3D" id="3.40.1450.10">
    <property type="entry name" value="BPG-independent phosphoglycerate mutase, domain B"/>
    <property type="match status" value="1"/>
</dbReference>
<dbReference type="HAMAP" id="MF_01038">
    <property type="entry name" value="GpmI"/>
    <property type="match status" value="1"/>
</dbReference>
<dbReference type="InterPro" id="IPR017850">
    <property type="entry name" value="Alkaline_phosphatase_core_sf"/>
</dbReference>
<dbReference type="InterPro" id="IPR011258">
    <property type="entry name" value="BPG-indep_PGM_N"/>
</dbReference>
<dbReference type="InterPro" id="IPR006124">
    <property type="entry name" value="Metalloenzyme"/>
</dbReference>
<dbReference type="InterPro" id="IPR036646">
    <property type="entry name" value="PGAM_B_sf"/>
</dbReference>
<dbReference type="InterPro" id="IPR005995">
    <property type="entry name" value="Pgm_bpd_ind"/>
</dbReference>
<dbReference type="NCBIfam" id="TIGR01307">
    <property type="entry name" value="pgm_bpd_ind"/>
    <property type="match status" value="1"/>
</dbReference>
<dbReference type="PANTHER" id="PTHR31637">
    <property type="entry name" value="2,3-BISPHOSPHOGLYCERATE-INDEPENDENT PHOSPHOGLYCERATE MUTASE"/>
    <property type="match status" value="1"/>
</dbReference>
<dbReference type="PANTHER" id="PTHR31637:SF0">
    <property type="entry name" value="2,3-BISPHOSPHOGLYCERATE-INDEPENDENT PHOSPHOGLYCERATE MUTASE"/>
    <property type="match status" value="1"/>
</dbReference>
<dbReference type="Pfam" id="PF06415">
    <property type="entry name" value="iPGM_N"/>
    <property type="match status" value="1"/>
</dbReference>
<dbReference type="Pfam" id="PF01676">
    <property type="entry name" value="Metalloenzyme"/>
    <property type="match status" value="1"/>
</dbReference>
<dbReference type="PIRSF" id="PIRSF001492">
    <property type="entry name" value="IPGAM"/>
    <property type="match status" value="1"/>
</dbReference>
<dbReference type="SUPFAM" id="SSF64158">
    <property type="entry name" value="2,3-Bisphosphoglycerate-independent phosphoglycerate mutase, substrate-binding domain"/>
    <property type="match status" value="1"/>
</dbReference>
<dbReference type="SUPFAM" id="SSF53649">
    <property type="entry name" value="Alkaline phosphatase-like"/>
    <property type="match status" value="1"/>
</dbReference>
<reference key="1">
    <citation type="journal article" date="2011" name="MBio">
        <title>Novel metabolic attributes of the genus Cyanothece, comprising a group of unicellular nitrogen-fixing Cyanobacteria.</title>
        <authorList>
            <person name="Bandyopadhyay A."/>
            <person name="Elvitigala T."/>
            <person name="Welsh E."/>
            <person name="Stockel J."/>
            <person name="Liberton M."/>
            <person name="Min H."/>
            <person name="Sherman L.A."/>
            <person name="Pakrasi H.B."/>
        </authorList>
    </citation>
    <scope>NUCLEOTIDE SEQUENCE [LARGE SCALE GENOMIC DNA]</scope>
    <source>
        <strain>PCC 8801 / RF-1</strain>
    </source>
</reference>
<feature type="chain" id="PRO_1000135898" description="2,3-bisphosphoglycerate-independent phosphoglycerate mutase">
    <location>
        <begin position="1"/>
        <end position="532"/>
    </location>
</feature>
<feature type="active site" description="Phosphoserine intermediate" evidence="1">
    <location>
        <position position="65"/>
    </location>
</feature>
<feature type="binding site" evidence="1">
    <location>
        <position position="15"/>
    </location>
    <ligand>
        <name>Mn(2+)</name>
        <dbReference type="ChEBI" id="CHEBI:29035"/>
        <label>2</label>
    </ligand>
</feature>
<feature type="binding site" evidence="1">
    <location>
        <position position="65"/>
    </location>
    <ligand>
        <name>Mn(2+)</name>
        <dbReference type="ChEBI" id="CHEBI:29035"/>
        <label>2</label>
    </ligand>
</feature>
<feature type="binding site" evidence="1">
    <location>
        <position position="126"/>
    </location>
    <ligand>
        <name>substrate</name>
    </ligand>
</feature>
<feature type="binding site" evidence="1">
    <location>
        <begin position="156"/>
        <end position="157"/>
    </location>
    <ligand>
        <name>substrate</name>
    </ligand>
</feature>
<feature type="binding site" evidence="1">
    <location>
        <position position="188"/>
    </location>
    <ligand>
        <name>substrate</name>
    </ligand>
</feature>
<feature type="binding site" evidence="1">
    <location>
        <position position="194"/>
    </location>
    <ligand>
        <name>substrate</name>
    </ligand>
</feature>
<feature type="binding site" evidence="1">
    <location>
        <begin position="258"/>
        <end position="261"/>
    </location>
    <ligand>
        <name>substrate</name>
    </ligand>
</feature>
<feature type="binding site" evidence="1">
    <location>
        <position position="331"/>
    </location>
    <ligand>
        <name>substrate</name>
    </ligand>
</feature>
<feature type="binding site" evidence="1">
    <location>
        <position position="398"/>
    </location>
    <ligand>
        <name>Mn(2+)</name>
        <dbReference type="ChEBI" id="CHEBI:29035"/>
        <label>1</label>
    </ligand>
</feature>
<feature type="binding site" evidence="1">
    <location>
        <position position="402"/>
    </location>
    <ligand>
        <name>Mn(2+)</name>
        <dbReference type="ChEBI" id="CHEBI:29035"/>
        <label>1</label>
    </ligand>
</feature>
<feature type="binding site" evidence="1">
    <location>
        <position position="439"/>
    </location>
    <ligand>
        <name>Mn(2+)</name>
        <dbReference type="ChEBI" id="CHEBI:29035"/>
        <label>2</label>
    </ligand>
</feature>
<feature type="binding site" evidence="1">
    <location>
        <position position="440"/>
    </location>
    <ligand>
        <name>Mn(2+)</name>
        <dbReference type="ChEBI" id="CHEBI:29035"/>
        <label>2</label>
    </ligand>
</feature>
<feature type="binding site" evidence="1">
    <location>
        <position position="457"/>
    </location>
    <ligand>
        <name>Mn(2+)</name>
        <dbReference type="ChEBI" id="CHEBI:29035"/>
        <label>1</label>
    </ligand>
</feature>
<gene>
    <name evidence="1" type="primary">gpmI</name>
    <name type="ordered locus">PCC8801_2264</name>
</gene>
<proteinExistence type="inferred from homology"/>
<name>GPMI_RIPO1</name>